<gene>
    <name evidence="1" type="primary">rplC</name>
    <name evidence="1" type="synonym">rpl3</name>
    <name type="ordered locus">all4215</name>
</gene>
<organism>
    <name type="scientific">Nostoc sp. (strain PCC 7120 / SAG 25.82 / UTEX 2576)</name>
    <dbReference type="NCBI Taxonomy" id="103690"/>
    <lineage>
        <taxon>Bacteria</taxon>
        <taxon>Bacillati</taxon>
        <taxon>Cyanobacteriota</taxon>
        <taxon>Cyanophyceae</taxon>
        <taxon>Nostocales</taxon>
        <taxon>Nostocaceae</taxon>
        <taxon>Nostoc</taxon>
    </lineage>
</organism>
<keyword id="KW-1185">Reference proteome</keyword>
<keyword id="KW-0687">Ribonucleoprotein</keyword>
<keyword id="KW-0689">Ribosomal protein</keyword>
<keyword id="KW-0694">RNA-binding</keyword>
<keyword id="KW-0699">rRNA-binding</keyword>
<comment type="function">
    <text evidence="1">One of the primary rRNA binding proteins, it binds directly near the 3'-end of the 23S rRNA, where it nucleates assembly of the 50S subunit.</text>
</comment>
<comment type="subunit">
    <text evidence="1">Part of the 50S ribosomal subunit. Forms a cluster with proteins L14 and L19.</text>
</comment>
<comment type="similarity">
    <text evidence="1">Belongs to the universal ribosomal protein uL3 family.</text>
</comment>
<dbReference type="EMBL" id="BA000019">
    <property type="protein sequence ID" value="BAB75914.1"/>
    <property type="molecule type" value="Genomic_DNA"/>
</dbReference>
<dbReference type="PIR" id="AH2332">
    <property type="entry name" value="AH2332"/>
</dbReference>
<dbReference type="RefSeq" id="WP_010998353.1">
    <property type="nucleotide sequence ID" value="NZ_RSCN01000010.1"/>
</dbReference>
<dbReference type="SMR" id="Q8YPH9"/>
<dbReference type="STRING" id="103690.gene:10496264"/>
<dbReference type="KEGG" id="ana:all4215"/>
<dbReference type="eggNOG" id="COG0087">
    <property type="taxonomic scope" value="Bacteria"/>
</dbReference>
<dbReference type="OrthoDB" id="9806135at2"/>
<dbReference type="Proteomes" id="UP000002483">
    <property type="component" value="Chromosome"/>
</dbReference>
<dbReference type="GO" id="GO:0022625">
    <property type="term" value="C:cytosolic large ribosomal subunit"/>
    <property type="evidence" value="ECO:0007669"/>
    <property type="project" value="TreeGrafter"/>
</dbReference>
<dbReference type="GO" id="GO:0019843">
    <property type="term" value="F:rRNA binding"/>
    <property type="evidence" value="ECO:0007669"/>
    <property type="project" value="UniProtKB-UniRule"/>
</dbReference>
<dbReference type="GO" id="GO:0003735">
    <property type="term" value="F:structural constituent of ribosome"/>
    <property type="evidence" value="ECO:0007669"/>
    <property type="project" value="InterPro"/>
</dbReference>
<dbReference type="GO" id="GO:0006412">
    <property type="term" value="P:translation"/>
    <property type="evidence" value="ECO:0007669"/>
    <property type="project" value="UniProtKB-UniRule"/>
</dbReference>
<dbReference type="FunFam" id="3.30.160.810:FF:000001">
    <property type="entry name" value="50S ribosomal protein L3"/>
    <property type="match status" value="1"/>
</dbReference>
<dbReference type="FunFam" id="2.40.30.10:FF:000065">
    <property type="entry name" value="50S ribosomal protein L3, chloroplastic"/>
    <property type="match status" value="1"/>
</dbReference>
<dbReference type="Gene3D" id="3.30.160.810">
    <property type="match status" value="1"/>
</dbReference>
<dbReference type="Gene3D" id="2.40.30.10">
    <property type="entry name" value="Translation factors"/>
    <property type="match status" value="1"/>
</dbReference>
<dbReference type="HAMAP" id="MF_01325_B">
    <property type="entry name" value="Ribosomal_uL3_B"/>
    <property type="match status" value="1"/>
</dbReference>
<dbReference type="InterPro" id="IPR000597">
    <property type="entry name" value="Ribosomal_uL3"/>
</dbReference>
<dbReference type="InterPro" id="IPR019927">
    <property type="entry name" value="Ribosomal_uL3_bac/org-type"/>
</dbReference>
<dbReference type="InterPro" id="IPR019926">
    <property type="entry name" value="Ribosomal_uL3_CS"/>
</dbReference>
<dbReference type="InterPro" id="IPR009000">
    <property type="entry name" value="Transl_B-barrel_sf"/>
</dbReference>
<dbReference type="NCBIfam" id="TIGR03625">
    <property type="entry name" value="L3_bact"/>
    <property type="match status" value="1"/>
</dbReference>
<dbReference type="PANTHER" id="PTHR11229">
    <property type="entry name" value="50S RIBOSOMAL PROTEIN L3"/>
    <property type="match status" value="1"/>
</dbReference>
<dbReference type="PANTHER" id="PTHR11229:SF16">
    <property type="entry name" value="LARGE RIBOSOMAL SUBUNIT PROTEIN UL3C"/>
    <property type="match status" value="1"/>
</dbReference>
<dbReference type="Pfam" id="PF00297">
    <property type="entry name" value="Ribosomal_L3"/>
    <property type="match status" value="1"/>
</dbReference>
<dbReference type="SUPFAM" id="SSF50447">
    <property type="entry name" value="Translation proteins"/>
    <property type="match status" value="1"/>
</dbReference>
<dbReference type="PROSITE" id="PS00474">
    <property type="entry name" value="RIBOSOMAL_L3"/>
    <property type="match status" value="1"/>
</dbReference>
<evidence type="ECO:0000255" key="1">
    <source>
        <dbReference type="HAMAP-Rule" id="MF_01325"/>
    </source>
</evidence>
<evidence type="ECO:0000256" key="2">
    <source>
        <dbReference type="SAM" id="MobiDB-lite"/>
    </source>
</evidence>
<evidence type="ECO:0000305" key="3"/>
<reference key="1">
    <citation type="journal article" date="2001" name="DNA Res.">
        <title>Complete genomic sequence of the filamentous nitrogen-fixing cyanobacterium Anabaena sp. strain PCC 7120.</title>
        <authorList>
            <person name="Kaneko T."/>
            <person name="Nakamura Y."/>
            <person name="Wolk C.P."/>
            <person name="Kuritz T."/>
            <person name="Sasamoto S."/>
            <person name="Watanabe A."/>
            <person name="Iriguchi M."/>
            <person name="Ishikawa A."/>
            <person name="Kawashima K."/>
            <person name="Kimura T."/>
            <person name="Kishida Y."/>
            <person name="Kohara M."/>
            <person name="Matsumoto M."/>
            <person name="Matsuno A."/>
            <person name="Muraki A."/>
            <person name="Nakazaki N."/>
            <person name="Shimpo S."/>
            <person name="Sugimoto M."/>
            <person name="Takazawa M."/>
            <person name="Yamada M."/>
            <person name="Yasuda M."/>
            <person name="Tabata S."/>
        </authorList>
    </citation>
    <scope>NUCLEOTIDE SEQUENCE [LARGE SCALE GENOMIC DNA]</scope>
    <source>
        <strain>PCC 7120 / SAG 25.82 / UTEX 2576</strain>
    </source>
</reference>
<protein>
    <recommendedName>
        <fullName evidence="1">Large ribosomal subunit protein uL3</fullName>
    </recommendedName>
    <alternativeName>
        <fullName evidence="3">50S ribosomal protein L3</fullName>
    </alternativeName>
</protein>
<feature type="chain" id="PRO_0000077059" description="Large ribosomal subunit protein uL3">
    <location>
        <begin position="1"/>
        <end position="211"/>
    </location>
</feature>
<feature type="region of interest" description="Disordered" evidence="2">
    <location>
        <begin position="122"/>
        <end position="156"/>
    </location>
</feature>
<proteinExistence type="inferred from homology"/>
<accession>Q8YPH9</accession>
<sequence length="211" mass="22056">MSVGILGTKLGMTQIFDEAGVAIPVTVVQVGPCVVTQVKSKQTDGYAAIQVGYGEVKPKALNRPLLGHLAKSSAPALRHLKEYHTDGSSDYALGQEIKADIFSVGELVDVIGTSIGRGFAGNQKRNNFGRGPMSHGSKNHRAPGSIGAGTTPGRVYPGKRMAGRLGGTRVTIRKLTVIRVDAERNLLLIKGAVPGKPGALLSIVPAKKVGK</sequence>
<name>RL3_NOSS1</name>